<keyword id="KW-0149">Chlorophyll biosynthesis</keyword>
<keyword id="KW-0150">Chloroplast</keyword>
<keyword id="KW-0472">Membrane</keyword>
<keyword id="KW-0521">NADP</keyword>
<keyword id="KW-0560">Oxidoreductase</keyword>
<keyword id="KW-0602">Photosynthesis</keyword>
<keyword id="KW-0934">Plastid</keyword>
<keyword id="KW-1185">Reference proteome</keyword>
<keyword id="KW-0809">Transit peptide</keyword>
<protein>
    <recommendedName>
        <fullName>Geranylgeranyl diphosphate reductase, chloroplastic</fullName>
        <ecNumber>1.3.1.83</ecNumber>
    </recommendedName>
    <alternativeName>
        <fullName>Geranylgeranyl reductase</fullName>
    </alternativeName>
</protein>
<feature type="transit peptide" description="Chloroplast" evidence="1">
    <location>
        <begin position="1"/>
        <end position="43"/>
    </location>
</feature>
<feature type="chain" id="PRO_0000386542" description="Geranylgeranyl diphosphate reductase, chloroplastic">
    <location>
        <begin position="44"/>
        <end position="467"/>
    </location>
</feature>
<feature type="sequence conflict" description="In Ref. 4; AAN31803." evidence="4" ref="4">
    <original>T</original>
    <variation>A</variation>
    <location>
        <position position="194"/>
    </location>
</feature>
<feature type="sequence conflict" description="In Ref. 6; BAH20239." evidence="4" ref="6">
    <original>K</original>
    <variation>E</variation>
    <location>
        <position position="431"/>
    </location>
</feature>
<reference key="1">
    <citation type="journal article" date="1998" name="Eur. J. Biochem.">
        <title>Metabolic compartmentation of plastid prenyllipid biosynthesis -- evidence for the involvement of a multifunctional geranylgeranyl reductase.</title>
        <authorList>
            <person name="Keller Y."/>
            <person name="Bouvier F."/>
            <person name="d'Harlingue A."/>
            <person name="Camara B."/>
        </authorList>
    </citation>
    <scope>NUCLEOTIDE SEQUENCE [GENOMIC DNA]</scope>
    <scope>FUNCTION</scope>
    <scope>DEVELOPMENTAL STAGE</scope>
</reference>
<reference key="2">
    <citation type="journal article" date="2000" name="Nature">
        <title>Sequence and analysis of chromosome 1 of the plant Arabidopsis thaliana.</title>
        <authorList>
            <person name="Theologis A."/>
            <person name="Ecker J.R."/>
            <person name="Palm C.J."/>
            <person name="Federspiel N.A."/>
            <person name="Kaul S."/>
            <person name="White O."/>
            <person name="Alonso J."/>
            <person name="Altafi H."/>
            <person name="Araujo R."/>
            <person name="Bowman C.L."/>
            <person name="Brooks S.Y."/>
            <person name="Buehler E."/>
            <person name="Chan A."/>
            <person name="Chao Q."/>
            <person name="Chen H."/>
            <person name="Cheuk R.F."/>
            <person name="Chin C.W."/>
            <person name="Chung M.K."/>
            <person name="Conn L."/>
            <person name="Conway A.B."/>
            <person name="Conway A.R."/>
            <person name="Creasy T.H."/>
            <person name="Dewar K."/>
            <person name="Dunn P."/>
            <person name="Etgu P."/>
            <person name="Feldblyum T.V."/>
            <person name="Feng J.-D."/>
            <person name="Fong B."/>
            <person name="Fujii C.Y."/>
            <person name="Gill J.E."/>
            <person name="Goldsmith A.D."/>
            <person name="Haas B."/>
            <person name="Hansen N.F."/>
            <person name="Hughes B."/>
            <person name="Huizar L."/>
            <person name="Hunter J.L."/>
            <person name="Jenkins J."/>
            <person name="Johnson-Hopson C."/>
            <person name="Khan S."/>
            <person name="Khaykin E."/>
            <person name="Kim C.J."/>
            <person name="Koo H.L."/>
            <person name="Kremenetskaia I."/>
            <person name="Kurtz D.B."/>
            <person name="Kwan A."/>
            <person name="Lam B."/>
            <person name="Langin-Hooper S."/>
            <person name="Lee A."/>
            <person name="Lee J.M."/>
            <person name="Lenz C.A."/>
            <person name="Li J.H."/>
            <person name="Li Y.-P."/>
            <person name="Lin X."/>
            <person name="Liu S.X."/>
            <person name="Liu Z.A."/>
            <person name="Luros J.S."/>
            <person name="Maiti R."/>
            <person name="Marziali A."/>
            <person name="Militscher J."/>
            <person name="Miranda M."/>
            <person name="Nguyen M."/>
            <person name="Nierman W.C."/>
            <person name="Osborne B.I."/>
            <person name="Pai G."/>
            <person name="Peterson J."/>
            <person name="Pham P.K."/>
            <person name="Rizzo M."/>
            <person name="Rooney T."/>
            <person name="Rowley D."/>
            <person name="Sakano H."/>
            <person name="Salzberg S.L."/>
            <person name="Schwartz J.R."/>
            <person name="Shinn P."/>
            <person name="Southwick A.M."/>
            <person name="Sun H."/>
            <person name="Tallon L.J."/>
            <person name="Tambunga G."/>
            <person name="Toriumi M.J."/>
            <person name="Town C.D."/>
            <person name="Utterback T."/>
            <person name="Van Aken S."/>
            <person name="Vaysberg M."/>
            <person name="Vysotskaia V.S."/>
            <person name="Walker M."/>
            <person name="Wu D."/>
            <person name="Yu G."/>
            <person name="Fraser C.M."/>
            <person name="Venter J.C."/>
            <person name="Davis R.W."/>
        </authorList>
    </citation>
    <scope>NUCLEOTIDE SEQUENCE [LARGE SCALE GENOMIC DNA]</scope>
    <source>
        <strain>cv. Columbia</strain>
    </source>
</reference>
<reference key="3">
    <citation type="journal article" date="2017" name="Plant J.">
        <title>Araport11: a complete reannotation of the Arabidopsis thaliana reference genome.</title>
        <authorList>
            <person name="Cheng C.Y."/>
            <person name="Krishnakumar V."/>
            <person name="Chan A.P."/>
            <person name="Thibaud-Nissen F."/>
            <person name="Schobel S."/>
            <person name="Town C.D."/>
        </authorList>
    </citation>
    <scope>GENOME REANNOTATION</scope>
    <source>
        <strain>cv. Columbia</strain>
    </source>
</reference>
<reference key="4">
    <citation type="journal article" date="2003" name="Science">
        <title>Empirical analysis of transcriptional activity in the Arabidopsis genome.</title>
        <authorList>
            <person name="Yamada K."/>
            <person name="Lim J."/>
            <person name="Dale J.M."/>
            <person name="Chen H."/>
            <person name="Shinn P."/>
            <person name="Palm C.J."/>
            <person name="Southwick A.M."/>
            <person name="Wu H.C."/>
            <person name="Kim C.J."/>
            <person name="Nguyen M."/>
            <person name="Pham P.K."/>
            <person name="Cheuk R.F."/>
            <person name="Karlin-Newmann G."/>
            <person name="Liu S.X."/>
            <person name="Lam B."/>
            <person name="Sakano H."/>
            <person name="Wu T."/>
            <person name="Yu G."/>
            <person name="Miranda M."/>
            <person name="Quach H.L."/>
            <person name="Tripp M."/>
            <person name="Chang C.H."/>
            <person name="Lee J.M."/>
            <person name="Toriumi M.J."/>
            <person name="Chan M.M."/>
            <person name="Tang C.C."/>
            <person name="Onodera C.S."/>
            <person name="Deng J.M."/>
            <person name="Akiyama K."/>
            <person name="Ansari Y."/>
            <person name="Arakawa T."/>
            <person name="Banh J."/>
            <person name="Banno F."/>
            <person name="Bowser L."/>
            <person name="Brooks S.Y."/>
            <person name="Carninci P."/>
            <person name="Chao Q."/>
            <person name="Choy N."/>
            <person name="Enju A."/>
            <person name="Goldsmith A.D."/>
            <person name="Gurjal M."/>
            <person name="Hansen N.F."/>
            <person name="Hayashizaki Y."/>
            <person name="Johnson-Hopson C."/>
            <person name="Hsuan V.W."/>
            <person name="Iida K."/>
            <person name="Karnes M."/>
            <person name="Khan S."/>
            <person name="Koesema E."/>
            <person name="Ishida J."/>
            <person name="Jiang P.X."/>
            <person name="Jones T."/>
            <person name="Kawai J."/>
            <person name="Kamiya A."/>
            <person name="Meyers C."/>
            <person name="Nakajima M."/>
            <person name="Narusaka M."/>
            <person name="Seki M."/>
            <person name="Sakurai T."/>
            <person name="Satou M."/>
            <person name="Tamse R."/>
            <person name="Vaysberg M."/>
            <person name="Wallender E.K."/>
            <person name="Wong C."/>
            <person name="Yamamura Y."/>
            <person name="Yuan S."/>
            <person name="Shinozaki K."/>
            <person name="Davis R.W."/>
            <person name="Theologis A."/>
            <person name="Ecker J.R."/>
        </authorList>
    </citation>
    <scope>NUCLEOTIDE SEQUENCE [LARGE SCALE MRNA]</scope>
    <source>
        <strain>cv. Columbia</strain>
    </source>
</reference>
<reference key="5">
    <citation type="submission" date="2005-03" db="EMBL/GenBank/DDBJ databases">
        <title>Large-scale analysis of RIKEN Arabidopsis full-length (RAFL) cDNAs.</title>
        <authorList>
            <person name="Totoki Y."/>
            <person name="Seki M."/>
            <person name="Ishida J."/>
            <person name="Nakajima M."/>
            <person name="Enju A."/>
            <person name="Kamiya A."/>
            <person name="Narusaka M."/>
            <person name="Shin-i T."/>
            <person name="Nakagawa M."/>
            <person name="Sakamoto N."/>
            <person name="Oishi K."/>
            <person name="Kohara Y."/>
            <person name="Kobayashi M."/>
            <person name="Toyoda A."/>
            <person name="Sakaki Y."/>
            <person name="Sakurai T."/>
            <person name="Iida K."/>
            <person name="Akiyama K."/>
            <person name="Satou M."/>
            <person name="Toyoda T."/>
            <person name="Konagaya A."/>
            <person name="Carninci P."/>
            <person name="Kawai J."/>
            <person name="Hayashizaki Y."/>
            <person name="Shinozaki K."/>
        </authorList>
    </citation>
    <scope>NUCLEOTIDE SEQUENCE [LARGE SCALE MRNA] OF 308-467</scope>
    <source>
        <strain>cv. Columbia</strain>
    </source>
</reference>
<reference key="6">
    <citation type="journal article" date="2009" name="DNA Res.">
        <title>Analysis of multiple occurrences of alternative splicing events in Arabidopsis thaliana using novel sequenced full-length cDNAs.</title>
        <authorList>
            <person name="Iida K."/>
            <person name="Fukami-Kobayashi K."/>
            <person name="Toyoda A."/>
            <person name="Sakaki Y."/>
            <person name="Kobayashi M."/>
            <person name="Seki M."/>
            <person name="Shinozaki K."/>
        </authorList>
    </citation>
    <scope>NUCLEOTIDE SEQUENCE [LARGE SCALE MRNA] OF 308-467</scope>
    <source>
        <strain>cv. Columbia</strain>
    </source>
</reference>
<reference key="7">
    <citation type="journal article" date="2012" name="FEBS Lett.">
        <title>FLU, a negative feedback regulator of tetrapyrrole biosynthesis, is physically linked to the final steps of the Mg(++)-branch of this pathway.</title>
        <authorList>
            <person name="Kauss D."/>
            <person name="Bischof S."/>
            <person name="Steiner S."/>
            <person name="Apel K."/>
            <person name="Meskauskiene R."/>
        </authorList>
    </citation>
    <scope>SUBCELLULAR LOCATION</scope>
    <scope>IDENTIFICATION IN THE FLU-CONTAINING CHLOROPLAST MEMBRANE COMPLEX</scope>
</reference>
<accession>Q9CA67</accession>
<accession>B9DHM2</accession>
<accession>O49594</accession>
<accession>Q56YY5</accession>
<accession>Q8H170</accession>
<dbReference type="EC" id="1.3.1.83"/>
<dbReference type="EMBL" id="Y14044">
    <property type="protein sequence ID" value="CAA74372.1"/>
    <property type="status" value="ALT_INIT"/>
    <property type="molecule type" value="Genomic_DNA"/>
</dbReference>
<dbReference type="EMBL" id="AC011765">
    <property type="protein sequence ID" value="AAG52372.1"/>
    <property type="molecule type" value="Genomic_DNA"/>
</dbReference>
<dbReference type="EMBL" id="CP002684">
    <property type="protein sequence ID" value="AEE35597.1"/>
    <property type="molecule type" value="Genomic_DNA"/>
</dbReference>
<dbReference type="EMBL" id="AY050893">
    <property type="protein sequence ID" value="AAK92830.1"/>
    <property type="molecule type" value="mRNA"/>
</dbReference>
<dbReference type="EMBL" id="AY052328">
    <property type="protein sequence ID" value="AAK96521.1"/>
    <property type="molecule type" value="mRNA"/>
</dbReference>
<dbReference type="EMBL" id="AY059860">
    <property type="protein sequence ID" value="AAL24342.1"/>
    <property type="molecule type" value="mRNA"/>
</dbReference>
<dbReference type="EMBL" id="AY075688">
    <property type="protein sequence ID" value="AAL77695.1"/>
    <property type="molecule type" value="mRNA"/>
</dbReference>
<dbReference type="EMBL" id="AY091297">
    <property type="protein sequence ID" value="AAM14236.1"/>
    <property type="molecule type" value="mRNA"/>
</dbReference>
<dbReference type="EMBL" id="AY102144">
    <property type="protein sequence ID" value="AAM26711.1"/>
    <property type="molecule type" value="mRNA"/>
</dbReference>
<dbReference type="EMBL" id="BT000734">
    <property type="protein sequence ID" value="AAN31876.1"/>
    <property type="molecule type" value="mRNA"/>
</dbReference>
<dbReference type="EMBL" id="BT002571">
    <property type="protein sequence ID" value="AAO00931.1"/>
    <property type="molecule type" value="mRNA"/>
</dbReference>
<dbReference type="EMBL" id="BT000656">
    <property type="protein sequence ID" value="AAN31803.1"/>
    <property type="molecule type" value="mRNA"/>
</dbReference>
<dbReference type="EMBL" id="AK221185">
    <property type="protein sequence ID" value="BAD95270.1"/>
    <property type="molecule type" value="mRNA"/>
</dbReference>
<dbReference type="EMBL" id="AK317575">
    <property type="protein sequence ID" value="BAH20239.1"/>
    <property type="molecule type" value="mRNA"/>
</dbReference>
<dbReference type="PIR" id="F96773">
    <property type="entry name" value="F96773"/>
</dbReference>
<dbReference type="RefSeq" id="NP_177587.1">
    <property type="nucleotide sequence ID" value="NM_106107.3"/>
</dbReference>
<dbReference type="SMR" id="Q9CA67"/>
<dbReference type="BioGRID" id="29007">
    <property type="interactions" value="3"/>
</dbReference>
<dbReference type="DIP" id="DIP-53238N"/>
<dbReference type="FunCoup" id="Q9CA67">
    <property type="interactions" value="795"/>
</dbReference>
<dbReference type="IntAct" id="Q9CA67">
    <property type="interactions" value="7"/>
</dbReference>
<dbReference type="MINT" id="Q9CA67"/>
<dbReference type="STRING" id="3702.Q9CA67"/>
<dbReference type="PaxDb" id="3702-AT1G74470.1"/>
<dbReference type="ProteomicsDB" id="246880"/>
<dbReference type="EnsemblPlants" id="AT1G74470.1">
    <property type="protein sequence ID" value="AT1G74470.1"/>
    <property type="gene ID" value="AT1G74470"/>
</dbReference>
<dbReference type="GeneID" id="843788"/>
<dbReference type="Gramene" id="AT1G74470.1">
    <property type="protein sequence ID" value="AT1G74470.1"/>
    <property type="gene ID" value="AT1G74470"/>
</dbReference>
<dbReference type="KEGG" id="ath:AT1G74470"/>
<dbReference type="Araport" id="AT1G74470"/>
<dbReference type="TAIR" id="AT1G74470"/>
<dbReference type="eggNOG" id="ENOG502QQWY">
    <property type="taxonomic scope" value="Eukaryota"/>
</dbReference>
<dbReference type="HOGENOM" id="CLU_024648_3_1_1"/>
<dbReference type="InParanoid" id="Q9CA67"/>
<dbReference type="OMA" id="WPAYAWS"/>
<dbReference type="OrthoDB" id="655030at2759"/>
<dbReference type="PhylomeDB" id="Q9CA67"/>
<dbReference type="BioCyc" id="ARA:AT1G74470-MONOMER"/>
<dbReference type="BioCyc" id="MetaCyc:AT1G74470-MONOMER"/>
<dbReference type="BRENDA" id="1.3.1.83">
    <property type="organism ID" value="399"/>
</dbReference>
<dbReference type="UniPathway" id="UPA00160"/>
<dbReference type="UniPathway" id="UPA00668"/>
<dbReference type="CD-CODE" id="4299E36E">
    <property type="entry name" value="Nucleolus"/>
</dbReference>
<dbReference type="PRO" id="PR:Q9CA67"/>
<dbReference type="Proteomes" id="UP000006548">
    <property type="component" value="Chromosome 1"/>
</dbReference>
<dbReference type="ExpressionAtlas" id="Q9CA67">
    <property type="expression patterns" value="baseline and differential"/>
</dbReference>
<dbReference type="GO" id="GO:0009507">
    <property type="term" value="C:chloroplast"/>
    <property type="evidence" value="ECO:0007005"/>
    <property type="project" value="TAIR"/>
</dbReference>
<dbReference type="GO" id="GO:0009941">
    <property type="term" value="C:chloroplast envelope"/>
    <property type="evidence" value="ECO:0007005"/>
    <property type="project" value="TAIR"/>
</dbReference>
<dbReference type="GO" id="GO:0031969">
    <property type="term" value="C:chloroplast membrane"/>
    <property type="evidence" value="ECO:0007669"/>
    <property type="project" value="UniProtKB-SubCell"/>
</dbReference>
<dbReference type="GO" id="GO:0009534">
    <property type="term" value="C:chloroplast thylakoid"/>
    <property type="evidence" value="ECO:0007005"/>
    <property type="project" value="TAIR"/>
</dbReference>
<dbReference type="GO" id="GO:0009535">
    <property type="term" value="C:chloroplast thylakoid membrane"/>
    <property type="evidence" value="ECO:0007005"/>
    <property type="project" value="TAIR"/>
</dbReference>
<dbReference type="GO" id="GO:0005739">
    <property type="term" value="C:mitochondrion"/>
    <property type="evidence" value="ECO:0007005"/>
    <property type="project" value="TAIR"/>
</dbReference>
<dbReference type="GO" id="GO:0071949">
    <property type="term" value="F:FAD binding"/>
    <property type="evidence" value="ECO:0007669"/>
    <property type="project" value="InterPro"/>
</dbReference>
<dbReference type="GO" id="GO:0102067">
    <property type="term" value="F:geranylgeranyl diphosphate reductase activity"/>
    <property type="evidence" value="ECO:0007669"/>
    <property type="project" value="UniProtKB-EC"/>
</dbReference>
<dbReference type="GO" id="GO:0045550">
    <property type="term" value="F:geranylgeranyl reductase activity"/>
    <property type="evidence" value="ECO:0007669"/>
    <property type="project" value="InterPro"/>
</dbReference>
<dbReference type="GO" id="GO:0015995">
    <property type="term" value="P:chlorophyll biosynthetic process"/>
    <property type="evidence" value="ECO:0007669"/>
    <property type="project" value="UniProtKB-UniPathway"/>
</dbReference>
<dbReference type="GO" id="GO:0015979">
    <property type="term" value="P:photosynthesis"/>
    <property type="evidence" value="ECO:0007669"/>
    <property type="project" value="UniProtKB-KW"/>
</dbReference>
<dbReference type="GO" id="GO:0010189">
    <property type="term" value="P:vitamin E biosynthetic process"/>
    <property type="evidence" value="ECO:0007669"/>
    <property type="project" value="UniProtKB-UniPathway"/>
</dbReference>
<dbReference type="FunFam" id="3.50.50.60:FF:000083">
    <property type="entry name" value="Geranylgeranyl diphosphate reductase"/>
    <property type="match status" value="1"/>
</dbReference>
<dbReference type="Gene3D" id="3.50.50.60">
    <property type="entry name" value="FAD/NAD(P)-binding domain"/>
    <property type="match status" value="1"/>
</dbReference>
<dbReference type="InterPro" id="IPR010253">
    <property type="entry name" value="BchP_ChlP_pln/prok"/>
</dbReference>
<dbReference type="InterPro" id="IPR002938">
    <property type="entry name" value="FAD-bd"/>
</dbReference>
<dbReference type="InterPro" id="IPR036188">
    <property type="entry name" value="FAD/NAD-bd_sf"/>
</dbReference>
<dbReference type="InterPro" id="IPR011777">
    <property type="entry name" value="Geranylgeranyl_Rdtase_fam"/>
</dbReference>
<dbReference type="InterPro" id="IPR011774">
    <property type="entry name" value="Geranylgeranyl_Rdtase_pln/cyn"/>
</dbReference>
<dbReference type="InterPro" id="IPR050407">
    <property type="entry name" value="Geranylgeranyl_reductase"/>
</dbReference>
<dbReference type="NCBIfam" id="TIGR02023">
    <property type="entry name" value="BchP-ChlP"/>
    <property type="match status" value="1"/>
</dbReference>
<dbReference type="NCBIfam" id="TIGR02028">
    <property type="entry name" value="ChlP"/>
    <property type="match status" value="1"/>
</dbReference>
<dbReference type="NCBIfam" id="TIGR02032">
    <property type="entry name" value="GG-red-SF"/>
    <property type="match status" value="1"/>
</dbReference>
<dbReference type="PANTHER" id="PTHR42685">
    <property type="entry name" value="GERANYLGERANYL DIPHOSPHATE REDUCTASE"/>
    <property type="match status" value="1"/>
</dbReference>
<dbReference type="PANTHER" id="PTHR42685:SF4">
    <property type="entry name" value="GERANYLGERANYL DIPHOSPHATE REDUCTASE, CHLOROPLASTIC"/>
    <property type="match status" value="1"/>
</dbReference>
<dbReference type="Pfam" id="PF01494">
    <property type="entry name" value="FAD_binding_3"/>
    <property type="match status" value="1"/>
</dbReference>
<dbReference type="PRINTS" id="PR00420">
    <property type="entry name" value="RNGMNOXGNASE"/>
</dbReference>
<dbReference type="SUPFAM" id="SSF51905">
    <property type="entry name" value="FAD/NAD(P)-binding domain"/>
    <property type="match status" value="1"/>
</dbReference>
<organism>
    <name type="scientific">Arabidopsis thaliana</name>
    <name type="common">Mouse-ear cress</name>
    <dbReference type="NCBI Taxonomy" id="3702"/>
    <lineage>
        <taxon>Eukaryota</taxon>
        <taxon>Viridiplantae</taxon>
        <taxon>Streptophyta</taxon>
        <taxon>Embryophyta</taxon>
        <taxon>Tracheophyta</taxon>
        <taxon>Spermatophyta</taxon>
        <taxon>Magnoliopsida</taxon>
        <taxon>eudicotyledons</taxon>
        <taxon>Gunneridae</taxon>
        <taxon>Pentapetalae</taxon>
        <taxon>rosids</taxon>
        <taxon>malvids</taxon>
        <taxon>Brassicales</taxon>
        <taxon>Brassicaceae</taxon>
        <taxon>Camelineae</taxon>
        <taxon>Arabidopsis</taxon>
    </lineage>
</organism>
<proteinExistence type="evidence at protein level"/>
<evidence type="ECO:0000255" key="1"/>
<evidence type="ECO:0000269" key="2">
    <source>
    </source>
</evidence>
<evidence type="ECO:0000269" key="3">
    <source>
    </source>
</evidence>
<evidence type="ECO:0000305" key="4"/>
<sequence>MATTVTLKSFTGLRQSSTEQTNFVSHVPSSLSLPQRRTSLRVTAARATPKLSNRKLRVAVIGGGPAGGAAAETLAQGGIETILIERKMDNCKPCGGAIPLCMVGEFNLPLDIIDRRVTKMKMISPSNIAVDIGRTLKEHEYIGMVRREVLDAYLRERAEKSGATVINGLFLKMDHPENWDSPYTLHYTEYDGKTGATGTKKTMEVDAVIGADGANSRVAKSIDAGDYDYAIAFQERIRIPDEKMTYYEDLAEMYVGDDVSPDFYGWVFPKCDHVAVGTGTVTHKGDIKKFQLATRNRAKDKILGGKIIRVEAHPIPEHPRPRRLSKRVALVGDAAGYVTKCSGEGIYFAAKSGRMCAEAIVEGSQNGKKMIDEGDLRKYLEKWDKTYLPTYRVLDVLQKVFYRSNPAREAFVEMCNDEYVQKMTFDSYLYKRVAPGSPLEDIKLAVNTIGSLVRANALRREIEKLSV</sequence>
<name>CHLP_ARATH</name>
<gene>
    <name type="primary">CHLP</name>
    <name type="ordered locus">At1g74470</name>
    <name type="ORF">F1M20.15</name>
</gene>
<comment type="function">
    <text evidence="3">Catalyzes the reduction of geranylgeranyl diphosphate to phytyl diphosphate, providing phytol for both tocopherol and chlorophyll synthesis.</text>
</comment>
<comment type="catalytic activity">
    <reaction>
        <text>phytyl diphosphate + 3 NADP(+) = geranylgeranyl diphosphate + 3 NADPH + 3 H(+)</text>
        <dbReference type="Rhea" id="RHEA:26229"/>
        <dbReference type="ChEBI" id="CHEBI:15378"/>
        <dbReference type="ChEBI" id="CHEBI:57533"/>
        <dbReference type="ChEBI" id="CHEBI:57783"/>
        <dbReference type="ChEBI" id="CHEBI:58349"/>
        <dbReference type="ChEBI" id="CHEBI:75434"/>
        <dbReference type="EC" id="1.3.1.83"/>
    </reaction>
</comment>
<comment type="pathway">
    <text>Porphyrin-containing compound metabolism; chlorophyll biosynthesis.</text>
</comment>
<comment type="pathway">
    <text>Cofactor biosynthesis; tocopherol biosynthesis.</text>
</comment>
<comment type="subunit">
    <text evidence="2">Part of the FLU-containing chloroplast membrane complex composed of FLU, CRD1, PORB, PORC, CHLP and HEMA1.</text>
</comment>
<comment type="interaction">
    <interactant intactId="EBI-2298544">
        <id>Q9CA67</id>
    </interactant>
    <interactant intactId="EBI-979321">
        <id>Q39016</id>
        <label>CPK11</label>
    </interactant>
    <organismsDiffer>false</organismsDiffer>
    <experiments>5</experiments>
</comment>
<comment type="interaction">
    <interactant intactId="EBI-2298544">
        <id>Q9CA67</id>
    </interactant>
    <interactant intactId="EBI-11361535">
        <id>Q9SYX1</id>
        <label>LIL3.1</label>
    </interactant>
    <organismsDiffer>false</organismsDiffer>
    <experiments>2</experiments>
</comment>
<comment type="interaction">
    <interactant intactId="EBI-2298544">
        <id>Q9CA67</id>
    </interactant>
    <interactant intactId="EBI-11361548">
        <id>Q6NKS4</id>
        <label>LIL3.2</label>
    </interactant>
    <organismsDiffer>false</organismsDiffer>
    <experiments>2</experiments>
</comment>
<comment type="subcellular location">
    <subcellularLocation>
        <location evidence="2">Plastid</location>
        <location evidence="2">Chloroplast membrane</location>
    </subcellularLocation>
</comment>
<comment type="developmental stage">
    <text evidence="3">Expressed during deetiolation and during chloroplast to chromoplast transformation.</text>
</comment>
<comment type="similarity">
    <text evidence="4">Belongs to the geranylgeranyl reductase family. ChlP subfamily.</text>
</comment>
<comment type="sequence caution" evidence="4">
    <conflict type="erroneous initiation">
        <sequence resource="EMBL-CDS" id="CAA74372"/>
    </conflict>
    <text>Extended N-terminus.</text>
</comment>